<name>JGN1B_DANRE</name>
<evidence type="ECO:0000250" key="1">
    <source>
        <dbReference type="UniProtKB" id="Q5XKN4"/>
    </source>
</evidence>
<evidence type="ECO:0000250" key="2">
    <source>
        <dbReference type="UniProtKB" id="Q8N5M9"/>
    </source>
</evidence>
<evidence type="ECO:0000255" key="3"/>
<evidence type="ECO:0000305" key="4"/>
<keyword id="KW-0256">Endoplasmic reticulum</keyword>
<keyword id="KW-0391">Immunity</keyword>
<keyword id="KW-0472">Membrane</keyword>
<keyword id="KW-0653">Protein transport</keyword>
<keyword id="KW-1185">Reference proteome</keyword>
<keyword id="KW-0812">Transmembrane</keyword>
<keyword id="KW-1133">Transmembrane helix</keyword>
<keyword id="KW-0813">Transport</keyword>
<dbReference type="EMBL" id="CR956626">
    <property type="protein sequence ID" value="CAK05033.1"/>
    <property type="molecule type" value="Genomic_DNA"/>
</dbReference>
<dbReference type="RefSeq" id="NP_001003584.2">
    <property type="nucleotide sequence ID" value="NM_001003584.2"/>
</dbReference>
<dbReference type="RefSeq" id="XP_009294715.2">
    <property type="nucleotide sequence ID" value="XM_009296440.4"/>
</dbReference>
<dbReference type="SMR" id="Q1L864"/>
<dbReference type="FunCoup" id="Q1L864">
    <property type="interactions" value="629"/>
</dbReference>
<dbReference type="PaxDb" id="7955-ENSDARP00000012395"/>
<dbReference type="Ensembl" id="ENSDART00000005883">
    <property type="protein sequence ID" value="ENSDARP00000012395"/>
    <property type="gene ID" value="ENSDARG00000014995"/>
</dbReference>
<dbReference type="Ensembl" id="ENSDART00000189538">
    <property type="protein sequence ID" value="ENSDARP00000145861"/>
    <property type="gene ID" value="ENSDARG00000014995"/>
</dbReference>
<dbReference type="GeneID" id="445190"/>
<dbReference type="KEGG" id="dre:445190"/>
<dbReference type="AGR" id="ZFIN:ZDB-GENE-040801-103"/>
<dbReference type="CTD" id="445190"/>
<dbReference type="ZFIN" id="ZDB-GENE-040801-103">
    <property type="gene designation" value="jagn1b"/>
</dbReference>
<dbReference type="eggNOG" id="KOG4054">
    <property type="taxonomic scope" value="Eukaryota"/>
</dbReference>
<dbReference type="HOGENOM" id="CLU_121621_0_0_1"/>
<dbReference type="InParanoid" id="Q1L864"/>
<dbReference type="OMA" id="IWILMAA"/>
<dbReference type="OrthoDB" id="8914197at2759"/>
<dbReference type="PhylomeDB" id="Q1L864"/>
<dbReference type="TreeFam" id="TF313137"/>
<dbReference type="PRO" id="PR:Q1L864"/>
<dbReference type="Proteomes" id="UP000000437">
    <property type="component" value="Chromosome 22"/>
</dbReference>
<dbReference type="Bgee" id="ENSDARG00000014995">
    <property type="expression patterns" value="Expressed in mature ovarian follicle and 27 other cell types or tissues"/>
</dbReference>
<dbReference type="GO" id="GO:0005783">
    <property type="term" value="C:endoplasmic reticulum"/>
    <property type="evidence" value="ECO:0000250"/>
    <property type="project" value="UniProtKB"/>
</dbReference>
<dbReference type="GO" id="GO:0005789">
    <property type="term" value="C:endoplasmic reticulum membrane"/>
    <property type="evidence" value="ECO:0000318"/>
    <property type="project" value="GO_Central"/>
</dbReference>
<dbReference type="GO" id="GO:0050832">
    <property type="term" value="P:defense response to fungus"/>
    <property type="evidence" value="ECO:0000250"/>
    <property type="project" value="UniProtKB"/>
</dbReference>
<dbReference type="GO" id="GO:0007029">
    <property type="term" value="P:endoplasmic reticulum organization"/>
    <property type="evidence" value="ECO:0000318"/>
    <property type="project" value="GO_Central"/>
</dbReference>
<dbReference type="GO" id="GO:0038158">
    <property type="term" value="P:granulocyte colony-stimulating factor signaling pathway"/>
    <property type="evidence" value="ECO:0000250"/>
    <property type="project" value="UniProtKB"/>
</dbReference>
<dbReference type="GO" id="GO:0030223">
    <property type="term" value="P:neutrophil differentiation"/>
    <property type="evidence" value="ECO:0000250"/>
    <property type="project" value="UniProtKB"/>
</dbReference>
<dbReference type="GO" id="GO:0002446">
    <property type="term" value="P:neutrophil mediated immunity"/>
    <property type="evidence" value="ECO:0000250"/>
    <property type="project" value="UniProtKB"/>
</dbReference>
<dbReference type="GO" id="GO:1990266">
    <property type="term" value="P:neutrophil migration"/>
    <property type="evidence" value="ECO:0000250"/>
    <property type="project" value="UniProtKB"/>
</dbReference>
<dbReference type="GO" id="GO:0015031">
    <property type="term" value="P:protein transport"/>
    <property type="evidence" value="ECO:0007669"/>
    <property type="project" value="UniProtKB-KW"/>
</dbReference>
<dbReference type="GO" id="GO:0016192">
    <property type="term" value="P:vesicle-mediated transport"/>
    <property type="evidence" value="ECO:0000250"/>
    <property type="project" value="UniProtKB"/>
</dbReference>
<dbReference type="InterPro" id="IPR009787">
    <property type="entry name" value="Jagunal"/>
</dbReference>
<dbReference type="PANTHER" id="PTHR20955">
    <property type="entry name" value="PROTEIN JAGUNAL HOMOLOG 1"/>
    <property type="match status" value="1"/>
</dbReference>
<dbReference type="PANTHER" id="PTHR20955:SF2">
    <property type="entry name" value="PROTEIN JAGUNAL HOMOLOG 1-B"/>
    <property type="match status" value="1"/>
</dbReference>
<dbReference type="Pfam" id="PF07086">
    <property type="entry name" value="Jagunal"/>
    <property type="match status" value="1"/>
</dbReference>
<gene>
    <name type="primary">jagn1b</name>
    <name type="ORF">si:ch73-162i18.3</name>
    <name type="ORF">zgc:101045</name>
</gene>
<comment type="function">
    <text evidence="1 2">Endoplasmic reticulum transmembrane protein involved in vesicle-mediated transport, which is required for neutrophil function.</text>
</comment>
<comment type="subcellular location">
    <subcellularLocation>
        <location evidence="2">Endoplasmic reticulum membrane</location>
        <topology evidence="3">Multi-pass membrane protein</topology>
    </subcellularLocation>
</comment>
<comment type="similarity">
    <text evidence="4">Belongs to the jagunal family.</text>
</comment>
<protein>
    <recommendedName>
        <fullName evidence="4">Protein jagunal homolog 1-B</fullName>
    </recommendedName>
</protein>
<reference key="1">
    <citation type="journal article" date="2013" name="Nature">
        <title>The zebrafish reference genome sequence and its relationship to the human genome.</title>
        <authorList>
            <person name="Howe K."/>
            <person name="Clark M.D."/>
            <person name="Torroja C.F."/>
            <person name="Torrance J."/>
            <person name="Berthelot C."/>
            <person name="Muffato M."/>
            <person name="Collins J.E."/>
            <person name="Humphray S."/>
            <person name="McLaren K."/>
            <person name="Matthews L."/>
            <person name="McLaren S."/>
            <person name="Sealy I."/>
            <person name="Caccamo M."/>
            <person name="Churcher C."/>
            <person name="Scott C."/>
            <person name="Barrett J.C."/>
            <person name="Koch R."/>
            <person name="Rauch G.J."/>
            <person name="White S."/>
            <person name="Chow W."/>
            <person name="Kilian B."/>
            <person name="Quintais L.T."/>
            <person name="Guerra-Assuncao J.A."/>
            <person name="Zhou Y."/>
            <person name="Gu Y."/>
            <person name="Yen J."/>
            <person name="Vogel J.H."/>
            <person name="Eyre T."/>
            <person name="Redmond S."/>
            <person name="Banerjee R."/>
            <person name="Chi J."/>
            <person name="Fu B."/>
            <person name="Langley E."/>
            <person name="Maguire S.F."/>
            <person name="Laird G.K."/>
            <person name="Lloyd D."/>
            <person name="Kenyon E."/>
            <person name="Donaldson S."/>
            <person name="Sehra H."/>
            <person name="Almeida-King J."/>
            <person name="Loveland J."/>
            <person name="Trevanion S."/>
            <person name="Jones M."/>
            <person name="Quail M."/>
            <person name="Willey D."/>
            <person name="Hunt A."/>
            <person name="Burton J."/>
            <person name="Sims S."/>
            <person name="McLay K."/>
            <person name="Plumb B."/>
            <person name="Davis J."/>
            <person name="Clee C."/>
            <person name="Oliver K."/>
            <person name="Clark R."/>
            <person name="Riddle C."/>
            <person name="Elliot D."/>
            <person name="Threadgold G."/>
            <person name="Harden G."/>
            <person name="Ware D."/>
            <person name="Begum S."/>
            <person name="Mortimore B."/>
            <person name="Kerry G."/>
            <person name="Heath P."/>
            <person name="Phillimore B."/>
            <person name="Tracey A."/>
            <person name="Corby N."/>
            <person name="Dunn M."/>
            <person name="Johnson C."/>
            <person name="Wood J."/>
            <person name="Clark S."/>
            <person name="Pelan S."/>
            <person name="Griffiths G."/>
            <person name="Smith M."/>
            <person name="Glithero R."/>
            <person name="Howden P."/>
            <person name="Barker N."/>
            <person name="Lloyd C."/>
            <person name="Stevens C."/>
            <person name="Harley J."/>
            <person name="Holt K."/>
            <person name="Panagiotidis G."/>
            <person name="Lovell J."/>
            <person name="Beasley H."/>
            <person name="Henderson C."/>
            <person name="Gordon D."/>
            <person name="Auger K."/>
            <person name="Wright D."/>
            <person name="Collins J."/>
            <person name="Raisen C."/>
            <person name="Dyer L."/>
            <person name="Leung K."/>
            <person name="Robertson L."/>
            <person name="Ambridge K."/>
            <person name="Leongamornlert D."/>
            <person name="McGuire S."/>
            <person name="Gilderthorp R."/>
            <person name="Griffiths C."/>
            <person name="Manthravadi D."/>
            <person name="Nichol S."/>
            <person name="Barker G."/>
            <person name="Whitehead S."/>
            <person name="Kay M."/>
            <person name="Brown J."/>
            <person name="Murnane C."/>
            <person name="Gray E."/>
            <person name="Humphries M."/>
            <person name="Sycamore N."/>
            <person name="Barker D."/>
            <person name="Saunders D."/>
            <person name="Wallis J."/>
            <person name="Babbage A."/>
            <person name="Hammond S."/>
            <person name="Mashreghi-Mohammadi M."/>
            <person name="Barr L."/>
            <person name="Martin S."/>
            <person name="Wray P."/>
            <person name="Ellington A."/>
            <person name="Matthews N."/>
            <person name="Ellwood M."/>
            <person name="Woodmansey R."/>
            <person name="Clark G."/>
            <person name="Cooper J."/>
            <person name="Tromans A."/>
            <person name="Grafham D."/>
            <person name="Skuce C."/>
            <person name="Pandian R."/>
            <person name="Andrews R."/>
            <person name="Harrison E."/>
            <person name="Kimberley A."/>
            <person name="Garnett J."/>
            <person name="Fosker N."/>
            <person name="Hall R."/>
            <person name="Garner P."/>
            <person name="Kelly D."/>
            <person name="Bird C."/>
            <person name="Palmer S."/>
            <person name="Gehring I."/>
            <person name="Berger A."/>
            <person name="Dooley C.M."/>
            <person name="Ersan-Urun Z."/>
            <person name="Eser C."/>
            <person name="Geiger H."/>
            <person name="Geisler M."/>
            <person name="Karotki L."/>
            <person name="Kirn A."/>
            <person name="Konantz J."/>
            <person name="Konantz M."/>
            <person name="Oberlander M."/>
            <person name="Rudolph-Geiger S."/>
            <person name="Teucke M."/>
            <person name="Lanz C."/>
            <person name="Raddatz G."/>
            <person name="Osoegawa K."/>
            <person name="Zhu B."/>
            <person name="Rapp A."/>
            <person name="Widaa S."/>
            <person name="Langford C."/>
            <person name="Yang F."/>
            <person name="Schuster S.C."/>
            <person name="Carter N.P."/>
            <person name="Harrow J."/>
            <person name="Ning Z."/>
            <person name="Herrero J."/>
            <person name="Searle S.M."/>
            <person name="Enright A."/>
            <person name="Geisler R."/>
            <person name="Plasterk R.H."/>
            <person name="Lee C."/>
            <person name="Westerfield M."/>
            <person name="de Jong P.J."/>
            <person name="Zon L.I."/>
            <person name="Postlethwait J.H."/>
            <person name="Nusslein-Volhard C."/>
            <person name="Hubbard T.J."/>
            <person name="Roest Crollius H."/>
            <person name="Rogers J."/>
            <person name="Stemple D.L."/>
        </authorList>
    </citation>
    <scope>NUCLEOTIDE SEQUENCE [LARGE SCALE GENOMIC DNA]</scope>
    <source>
        <strain>Tuebingen</strain>
    </source>
</reference>
<accession>Q1L864</accession>
<organism>
    <name type="scientific">Danio rerio</name>
    <name type="common">Zebrafish</name>
    <name type="synonym">Brachydanio rerio</name>
    <dbReference type="NCBI Taxonomy" id="7955"/>
    <lineage>
        <taxon>Eukaryota</taxon>
        <taxon>Metazoa</taxon>
        <taxon>Chordata</taxon>
        <taxon>Craniata</taxon>
        <taxon>Vertebrata</taxon>
        <taxon>Euteleostomi</taxon>
        <taxon>Actinopterygii</taxon>
        <taxon>Neopterygii</taxon>
        <taxon>Teleostei</taxon>
        <taxon>Ostariophysi</taxon>
        <taxon>Cypriniformes</taxon>
        <taxon>Danionidae</taxon>
        <taxon>Danioninae</taxon>
        <taxon>Danio</taxon>
    </lineage>
</organism>
<feature type="chain" id="PRO_0000313611" description="Protein jagunal homolog 1-B">
    <location>
        <begin position="1"/>
        <end position="183"/>
    </location>
</feature>
<feature type="topological domain" description="Cytoplasmic" evidence="3">
    <location>
        <begin position="1"/>
        <end position="39"/>
    </location>
</feature>
<feature type="transmembrane region" description="Helical" evidence="3">
    <location>
        <begin position="40"/>
        <end position="60"/>
    </location>
</feature>
<feature type="topological domain" description="Lumenal" evidence="3">
    <location>
        <begin position="61"/>
        <end position="71"/>
    </location>
</feature>
<feature type="transmembrane region" description="Helical" evidence="3">
    <location>
        <begin position="72"/>
        <end position="92"/>
    </location>
</feature>
<feature type="topological domain" description="Cytoplasmic" evidence="3">
    <location>
        <begin position="93"/>
        <end position="99"/>
    </location>
</feature>
<feature type="transmembrane region" description="Helical" evidence="3">
    <location>
        <begin position="100"/>
        <end position="120"/>
    </location>
</feature>
<feature type="topological domain" description="Lumenal" evidence="3">
    <location>
        <begin position="121"/>
        <end position="137"/>
    </location>
</feature>
<feature type="transmembrane region" description="Helical" evidence="3">
    <location>
        <begin position="138"/>
        <end position="158"/>
    </location>
</feature>
<feature type="topological domain" description="Cytoplasmic" evidence="3">
    <location>
        <begin position="159"/>
        <end position="183"/>
    </location>
</feature>
<proteinExistence type="inferred from homology"/>
<sequence>MASRAGPRATGTDGSDYQHRERVASHYQMSVALKSEIKKLNIAHAVVWFLVAAQVLVSQLNLVSHKVVASPYQWEYTYLLSIIPTVFSFMALPKNNISYLVISMISGGLFCIGPILYGGMEMFPVAQQLYRHGKAYRFIFGFSAVSIMYLVLIISVQVHGWQIYYSKKLLDAWFTNTQDKKKK</sequence>